<feature type="signal peptide" evidence="1">
    <location>
        <begin position="1"/>
        <end position="21"/>
    </location>
</feature>
<feature type="propeptide" id="PRO_0000023774" evidence="5">
    <location>
        <begin position="22"/>
        <end position="28"/>
    </location>
</feature>
<feature type="chain" id="PRO_0000023775" description="Ligninase B">
    <location>
        <begin position="29"/>
        <end position="372"/>
    </location>
</feature>
<feature type="region of interest" description="Disordered" evidence="4">
    <location>
        <begin position="350"/>
        <end position="372"/>
    </location>
</feature>
<feature type="compositionally biased region" description="Low complexity" evidence="4">
    <location>
        <begin position="350"/>
        <end position="361"/>
    </location>
</feature>
<feature type="active site" description="Proton acceptor" evidence="2 3">
    <location>
        <position position="75"/>
    </location>
</feature>
<feature type="binding site" evidence="2">
    <location>
        <position position="76"/>
    </location>
    <ligand>
        <name>Ca(2+)</name>
        <dbReference type="ChEBI" id="CHEBI:29108"/>
        <label>1</label>
    </ligand>
</feature>
<feature type="binding site" evidence="2">
    <location>
        <position position="94"/>
    </location>
    <ligand>
        <name>Ca(2+)</name>
        <dbReference type="ChEBI" id="CHEBI:29108"/>
        <label>1</label>
    </ligand>
</feature>
<feature type="binding site" evidence="2">
    <location>
        <position position="96"/>
    </location>
    <ligand>
        <name>Ca(2+)</name>
        <dbReference type="ChEBI" id="CHEBI:29108"/>
        <label>1</label>
    </ligand>
</feature>
<feature type="binding site" evidence="2">
    <location>
        <position position="98"/>
    </location>
    <ligand>
        <name>Ca(2+)</name>
        <dbReference type="ChEBI" id="CHEBI:29108"/>
        <label>1</label>
    </ligand>
</feature>
<feature type="binding site" description="axial binding residue" evidence="2">
    <location>
        <position position="204"/>
    </location>
    <ligand>
        <name>heme b</name>
        <dbReference type="ChEBI" id="CHEBI:60344"/>
    </ligand>
    <ligandPart>
        <name>Fe</name>
        <dbReference type="ChEBI" id="CHEBI:18248"/>
    </ligandPart>
</feature>
<feature type="binding site" evidence="2">
    <location>
        <position position="205"/>
    </location>
    <ligand>
        <name>Ca(2+)</name>
        <dbReference type="ChEBI" id="CHEBI:29108"/>
        <label>2</label>
    </ligand>
</feature>
<feature type="binding site" evidence="2">
    <location>
        <position position="222"/>
    </location>
    <ligand>
        <name>Ca(2+)</name>
        <dbReference type="ChEBI" id="CHEBI:29108"/>
        <label>2</label>
    </ligand>
</feature>
<feature type="binding site" evidence="2">
    <location>
        <position position="224"/>
    </location>
    <ligand>
        <name>Ca(2+)</name>
        <dbReference type="ChEBI" id="CHEBI:29108"/>
        <label>2</label>
    </ligand>
</feature>
<feature type="binding site" evidence="2">
    <location>
        <position position="227"/>
    </location>
    <ligand>
        <name>Ca(2+)</name>
        <dbReference type="ChEBI" id="CHEBI:29108"/>
        <label>2</label>
    </ligand>
</feature>
<feature type="binding site" evidence="2">
    <location>
        <position position="229"/>
    </location>
    <ligand>
        <name>Ca(2+)</name>
        <dbReference type="ChEBI" id="CHEBI:29108"/>
        <label>2</label>
    </ligand>
</feature>
<feature type="site" description="Transition state stabilizer" evidence="2">
    <location>
        <position position="71"/>
    </location>
</feature>
<feature type="glycosylation site" description="N-linked (GlcNAc...) asparagine" evidence="1">
    <location>
        <position position="285"/>
    </location>
</feature>
<feature type="disulfide bond" evidence="2">
    <location>
        <begin position="31"/>
        <end position="43"/>
    </location>
</feature>
<feature type="disulfide bond" evidence="2">
    <location>
        <begin position="42"/>
        <end position="313"/>
    </location>
</feature>
<feature type="disulfide bond" evidence="2">
    <location>
        <begin position="62"/>
        <end position="148"/>
    </location>
</feature>
<feature type="disulfide bond" evidence="2">
    <location>
        <begin position="277"/>
        <end position="345"/>
    </location>
</feature>
<reference key="1">
    <citation type="journal article" date="1991" name="Nucleic Acids Res.">
        <title>Genomic organization of lignin peroxidase genes of Phanerochaete chrysosporium.</title>
        <authorList>
            <person name="Gaskell J."/>
            <person name="Dieperink E."/>
            <person name="Cullen D."/>
        </authorList>
    </citation>
    <scope>NUCLEOTIDE SEQUENCE [GENOMIC DNA]</scope>
    <source>
        <strain>ATCC 24725 / DSM 6909 / CBS 481.73 / BCRC 36200 / NRRL 6361 / VKM F-1767</strain>
    </source>
</reference>
<reference key="2">
    <citation type="journal article" date="1988" name="Gene">
        <title>Molecular analysis of a Phanerochaete chrysosporium lignin peroxidase gene.</title>
        <authorList>
            <person name="Walther L."/>
            <person name="Kaelin M."/>
            <person name="Reiser J."/>
            <person name="Suter F."/>
            <person name="Fritsche B."/>
            <person name="Saloheimo M."/>
            <person name="Leisola M."/>
            <person name="Teeri T."/>
            <person name="Knowles J.K.C."/>
            <person name="Fiechter A."/>
        </authorList>
    </citation>
    <scope>PROTEIN SEQUENCE OF 29-58</scope>
    <scope>FUNCTION</scope>
    <scope>CATALYTIC ACTIVITY</scope>
    <scope>BIOPHYSICOCHEMICAL PROPERTIES</scope>
</reference>
<protein>
    <recommendedName>
        <fullName>Ligninase B</fullName>
        <ecNumber evidence="5">1.11.1.14</ecNumber>
    </recommendedName>
    <alternativeName>
        <fullName>Diarylpropane peroxidase</fullName>
    </alternativeName>
    <alternativeName>
        <fullName>Lignin peroxidase</fullName>
    </alternativeName>
</protein>
<keyword id="KW-0106">Calcium</keyword>
<keyword id="KW-0165">Cleavage on pair of basic residues</keyword>
<keyword id="KW-0903">Direct protein sequencing</keyword>
<keyword id="KW-1015">Disulfide bond</keyword>
<keyword id="KW-0325">Glycoprotein</keyword>
<keyword id="KW-0349">Heme</keyword>
<keyword id="KW-0376">Hydrogen peroxide</keyword>
<keyword id="KW-0408">Iron</keyword>
<keyword id="KW-0439">Lignin degradation</keyword>
<keyword id="KW-0479">Metal-binding</keyword>
<keyword id="KW-0560">Oxidoreductase</keyword>
<keyword id="KW-0575">Peroxidase</keyword>
<keyword id="KW-0732">Signal</keyword>
<keyword id="KW-0865">Zymogen</keyword>
<name>LIGB_PHACH</name>
<gene>
    <name type="primary">LIPB</name>
</gene>
<evidence type="ECO:0000255" key="1"/>
<evidence type="ECO:0000255" key="2">
    <source>
        <dbReference type="PROSITE-ProRule" id="PRU00297"/>
    </source>
</evidence>
<evidence type="ECO:0000255" key="3">
    <source>
        <dbReference type="PROSITE-ProRule" id="PRU10012"/>
    </source>
</evidence>
<evidence type="ECO:0000256" key="4">
    <source>
        <dbReference type="SAM" id="MobiDB-lite"/>
    </source>
</evidence>
<evidence type="ECO:0000269" key="5">
    <source>
    </source>
</evidence>
<evidence type="ECO:0000305" key="6"/>
<proteinExistence type="evidence at protein level"/>
<accession>P31838</accession>
<dbReference type="EC" id="1.11.1.14" evidence="5"/>
<dbReference type="EMBL" id="X54257">
    <property type="protein sequence ID" value="CAA38178.1"/>
    <property type="molecule type" value="Genomic_DNA"/>
</dbReference>
<dbReference type="PIR" id="A32322">
    <property type="entry name" value="A32322"/>
</dbReference>
<dbReference type="PIR" id="B32322">
    <property type="entry name" value="B32322"/>
</dbReference>
<dbReference type="PIR" id="PS0010">
    <property type="entry name" value="PS0010"/>
</dbReference>
<dbReference type="PIR" id="S13564">
    <property type="entry name" value="OPJGBP"/>
</dbReference>
<dbReference type="PIR" id="S69246">
    <property type="entry name" value="S69246"/>
</dbReference>
<dbReference type="SMR" id="P31838"/>
<dbReference type="CAZy" id="AA2">
    <property type="family name" value="Auxiliary Activities 2"/>
</dbReference>
<dbReference type="GlyCosmos" id="P31838">
    <property type="glycosylation" value="1 site, No reported glycans"/>
</dbReference>
<dbReference type="VEuPathDB" id="FungiDB:AGR57_14163"/>
<dbReference type="UniPathway" id="UPA00892"/>
<dbReference type="GO" id="GO:0016690">
    <property type="term" value="F:diarylpropane peroxidase activity"/>
    <property type="evidence" value="ECO:0007669"/>
    <property type="project" value="UniProtKB-EC"/>
</dbReference>
<dbReference type="GO" id="GO:0020037">
    <property type="term" value="F:heme binding"/>
    <property type="evidence" value="ECO:0007669"/>
    <property type="project" value="InterPro"/>
</dbReference>
<dbReference type="GO" id="GO:0046872">
    <property type="term" value="F:metal ion binding"/>
    <property type="evidence" value="ECO:0007669"/>
    <property type="project" value="UniProtKB-KW"/>
</dbReference>
<dbReference type="GO" id="GO:0034599">
    <property type="term" value="P:cellular response to oxidative stress"/>
    <property type="evidence" value="ECO:0007669"/>
    <property type="project" value="InterPro"/>
</dbReference>
<dbReference type="GO" id="GO:0042744">
    <property type="term" value="P:hydrogen peroxide catabolic process"/>
    <property type="evidence" value="ECO:0007669"/>
    <property type="project" value="UniProtKB-KW"/>
</dbReference>
<dbReference type="GO" id="GO:0046274">
    <property type="term" value="P:lignin catabolic process"/>
    <property type="evidence" value="ECO:0007669"/>
    <property type="project" value="UniProtKB-UniPathway"/>
</dbReference>
<dbReference type="GO" id="GO:0000302">
    <property type="term" value="P:response to reactive oxygen species"/>
    <property type="evidence" value="ECO:0007669"/>
    <property type="project" value="TreeGrafter"/>
</dbReference>
<dbReference type="CDD" id="cd00692">
    <property type="entry name" value="ligninase"/>
    <property type="match status" value="1"/>
</dbReference>
<dbReference type="Gene3D" id="1.10.520.10">
    <property type="match status" value="1"/>
</dbReference>
<dbReference type="Gene3D" id="1.10.420.10">
    <property type="entry name" value="Peroxidase, domain 2"/>
    <property type="match status" value="1"/>
</dbReference>
<dbReference type="InterPro" id="IPR044831">
    <property type="entry name" value="Ccp1-like"/>
</dbReference>
<dbReference type="InterPro" id="IPR002016">
    <property type="entry name" value="Haem_peroxidase"/>
</dbReference>
<dbReference type="InterPro" id="IPR010255">
    <property type="entry name" value="Haem_peroxidase_sf"/>
</dbReference>
<dbReference type="InterPro" id="IPR001621">
    <property type="entry name" value="Ligninase"/>
</dbReference>
<dbReference type="InterPro" id="IPR024589">
    <property type="entry name" value="Ligninase_C"/>
</dbReference>
<dbReference type="InterPro" id="IPR019794">
    <property type="entry name" value="Peroxidases_AS"/>
</dbReference>
<dbReference type="InterPro" id="IPR019793">
    <property type="entry name" value="Peroxidases_heam-ligand_BS"/>
</dbReference>
<dbReference type="PANTHER" id="PTHR31356:SF66">
    <property type="entry name" value="CATALASE-PEROXIDASE"/>
    <property type="match status" value="1"/>
</dbReference>
<dbReference type="PANTHER" id="PTHR31356">
    <property type="entry name" value="THYLAKOID LUMENAL 29 KDA PROTEIN, CHLOROPLASTIC-RELATED"/>
    <property type="match status" value="1"/>
</dbReference>
<dbReference type="Pfam" id="PF00141">
    <property type="entry name" value="peroxidase"/>
    <property type="match status" value="1"/>
</dbReference>
<dbReference type="Pfam" id="PF11895">
    <property type="entry name" value="Peroxidase_ext"/>
    <property type="match status" value="1"/>
</dbReference>
<dbReference type="PRINTS" id="PR00462">
    <property type="entry name" value="LIGNINASE"/>
</dbReference>
<dbReference type="PRINTS" id="PR00458">
    <property type="entry name" value="PEROXIDASE"/>
</dbReference>
<dbReference type="SUPFAM" id="SSF48113">
    <property type="entry name" value="Heme-dependent peroxidases"/>
    <property type="match status" value="1"/>
</dbReference>
<dbReference type="PROSITE" id="PS00435">
    <property type="entry name" value="PEROXIDASE_1"/>
    <property type="match status" value="1"/>
</dbReference>
<dbReference type="PROSITE" id="PS00436">
    <property type="entry name" value="PEROXIDASE_2"/>
    <property type="match status" value="1"/>
</dbReference>
<dbReference type="PROSITE" id="PS50873">
    <property type="entry name" value="PEROXIDASE_4"/>
    <property type="match status" value="1"/>
</dbReference>
<comment type="function">
    <text evidence="5">Depolymerization of lignin. Catalyzes the C(alpha)-C(beta) cleavage of the propyl side chains of lignin.</text>
</comment>
<comment type="catalytic activity">
    <reaction evidence="5">
        <text>1-(3,4-dimethoxyphenyl)-2-(2-methoxyphenoxy)propane-1,3-diol + H2O2 = 3,4-dimethoxybenzaldehyde + guaiacol + glycolaldehyde + H2O</text>
        <dbReference type="Rhea" id="RHEA:48004"/>
        <dbReference type="ChEBI" id="CHEBI:15377"/>
        <dbReference type="ChEBI" id="CHEBI:16240"/>
        <dbReference type="ChEBI" id="CHEBI:17071"/>
        <dbReference type="ChEBI" id="CHEBI:17098"/>
        <dbReference type="ChEBI" id="CHEBI:28591"/>
        <dbReference type="ChEBI" id="CHEBI:86963"/>
        <dbReference type="EC" id="1.11.1.14"/>
    </reaction>
</comment>
<comment type="catalytic activity">
    <reaction evidence="5">
        <text>2 (3,4-dimethoxyphenyl)methanol + H2O2 = 2 (3,4-dimethoxyphenyl)methanol radical + 2 H2O</text>
        <dbReference type="Rhea" id="RHEA:30271"/>
        <dbReference type="ChEBI" id="CHEBI:15377"/>
        <dbReference type="ChEBI" id="CHEBI:16240"/>
        <dbReference type="ChEBI" id="CHEBI:62150"/>
        <dbReference type="ChEBI" id="CHEBI:88143"/>
        <dbReference type="EC" id="1.11.1.14"/>
    </reaction>
</comment>
<comment type="cofactor">
    <cofactor evidence="2">
        <name>heme b</name>
        <dbReference type="ChEBI" id="CHEBI:60344"/>
    </cofactor>
    <text evidence="2">Binds 1 heme b (iron(II)-protoporphyrin IX) group per subunit.</text>
</comment>
<comment type="cofactor">
    <cofactor evidence="2">
        <name>Ca(2+)</name>
        <dbReference type="ChEBI" id="CHEBI:29108"/>
    </cofactor>
    <text evidence="2">Binds 2 calcium ions per subunit.</text>
</comment>
<comment type="biophysicochemical properties">
    <kinetics>
        <KM evidence="5">85 uM for H(2)O(2)</KM>
        <KM evidence="5">83 uM for (3,4-dimethoxyphenyl)methanol</KM>
    </kinetics>
    <phDependence>
        <text evidence="5">Optimum pH is 2.3.</text>
    </phDependence>
</comment>
<comment type="pathway">
    <text>Secondary metabolite metabolism; lignin degradation.</text>
</comment>
<comment type="similarity">
    <text evidence="6">Belongs to the peroxidase family. Ligninase subfamily.</text>
</comment>
<sequence length="372" mass="39530">MAFKQLFAAISLALSLSAANAAAVIEKRATCSNGKTVGDASCCAWFDVLDDIQQNLFHGGQCGAEAHESIRLVFHDSIAISPAMEAQGKFGGGGADGSIMIFDDIETAFHPNIGLDEIVKLQKPFVQKHGVTPGAFIAFAGAVALSNCPGAPQMNFFTGRAPATQPAPDGLVPEPFHTVDQIINRVNDAGEFDELELVWMLSAHSVAAVNDVDPTVQGLPFDSTPGIFDSQFFVETQLRGTAFPGSGGNQGEVESPLPGEIRIQSDHTIARDSRTACEWQSFVNNQSKLVDDFQFIFLALTQLGQDPNAMTDCSDVIPQSKPIPGNLPFSFFPAGKTIKDVEQACAETPFPTLTTLPGPETSVQRIPPPPGA</sequence>
<organism>
    <name type="scientific">Phanerodontia chrysosporium</name>
    <name type="common">White-rot fungus</name>
    <name type="synonym">Sporotrichum pruinosum</name>
    <dbReference type="NCBI Taxonomy" id="2822231"/>
    <lineage>
        <taxon>Eukaryota</taxon>
        <taxon>Fungi</taxon>
        <taxon>Dikarya</taxon>
        <taxon>Basidiomycota</taxon>
        <taxon>Agaricomycotina</taxon>
        <taxon>Agaricomycetes</taxon>
        <taxon>Polyporales</taxon>
        <taxon>Phanerochaetaceae</taxon>
        <taxon>Phanerodontia</taxon>
    </lineage>
</organism>